<feature type="chain" id="PRO_0000093234" description="Probable metal transport system ATP-binding protein CT_416">
    <location>
        <begin position="1"/>
        <end position="236"/>
    </location>
</feature>
<feature type="domain" description="ABC transporter" evidence="1">
    <location>
        <begin position="5"/>
        <end position="236"/>
    </location>
</feature>
<feature type="binding site" evidence="1">
    <location>
        <begin position="39"/>
        <end position="46"/>
    </location>
    <ligand>
        <name>ATP</name>
        <dbReference type="ChEBI" id="CHEBI:30616"/>
    </ligand>
</feature>
<gene>
    <name type="ordered locus">CT_416</name>
</gene>
<comment type="function">
    <text>Part of an ATP-driven transport system CT_415/CT_416/CT_417 for a metal. Probably responsible for energy coupling to the transport system.</text>
</comment>
<comment type="subcellular location">
    <subcellularLocation>
        <location evidence="2">Cell inner membrane</location>
        <topology evidence="2">Peripheral membrane protein</topology>
    </subcellularLocation>
</comment>
<comment type="similarity">
    <text evidence="2">Belongs to the ABC transporter superfamily.</text>
</comment>
<name>Y416_CHLTR</name>
<evidence type="ECO:0000255" key="1">
    <source>
        <dbReference type="PROSITE-ProRule" id="PRU00434"/>
    </source>
</evidence>
<evidence type="ECO:0000305" key="2"/>
<proteinExistence type="inferred from homology"/>
<organism>
    <name type="scientific">Chlamydia trachomatis serovar D (strain ATCC VR-885 / DSM 19411 / UW-3/Cx)</name>
    <dbReference type="NCBI Taxonomy" id="272561"/>
    <lineage>
        <taxon>Bacteria</taxon>
        <taxon>Pseudomonadati</taxon>
        <taxon>Chlamydiota</taxon>
        <taxon>Chlamydiia</taxon>
        <taxon>Chlamydiales</taxon>
        <taxon>Chlamydiaceae</taxon>
        <taxon>Chlamydia/Chlamydophila group</taxon>
        <taxon>Chlamydia</taxon>
    </lineage>
</organism>
<dbReference type="EMBL" id="AE001273">
    <property type="protein sequence ID" value="AAC68013.1"/>
    <property type="molecule type" value="Genomic_DNA"/>
</dbReference>
<dbReference type="PIR" id="C71517">
    <property type="entry name" value="C71517"/>
</dbReference>
<dbReference type="RefSeq" id="NP_219926.1">
    <property type="nucleotide sequence ID" value="NC_000117.1"/>
</dbReference>
<dbReference type="RefSeq" id="WP_009871768.1">
    <property type="nucleotide sequence ID" value="NC_000117.1"/>
</dbReference>
<dbReference type="SMR" id="O84421"/>
<dbReference type="FunCoup" id="O84421">
    <property type="interactions" value="36"/>
</dbReference>
<dbReference type="STRING" id="272561.CT_416"/>
<dbReference type="EnsemblBacteria" id="AAC68013">
    <property type="protein sequence ID" value="AAC68013"/>
    <property type="gene ID" value="CT_416"/>
</dbReference>
<dbReference type="GeneID" id="884700"/>
<dbReference type="KEGG" id="ctr:CT_416"/>
<dbReference type="PATRIC" id="fig|272561.5.peg.447"/>
<dbReference type="HOGENOM" id="CLU_000604_1_11_0"/>
<dbReference type="InParanoid" id="O84421"/>
<dbReference type="OrthoDB" id="9806726at2"/>
<dbReference type="Proteomes" id="UP000000431">
    <property type="component" value="Chromosome"/>
</dbReference>
<dbReference type="GO" id="GO:0043190">
    <property type="term" value="C:ATP-binding cassette (ABC) transporter complex"/>
    <property type="evidence" value="ECO:0000318"/>
    <property type="project" value="GO_Central"/>
</dbReference>
<dbReference type="GO" id="GO:0005524">
    <property type="term" value="F:ATP binding"/>
    <property type="evidence" value="ECO:0007669"/>
    <property type="project" value="UniProtKB-KW"/>
</dbReference>
<dbReference type="GO" id="GO:0016887">
    <property type="term" value="F:ATP hydrolysis activity"/>
    <property type="evidence" value="ECO:0007669"/>
    <property type="project" value="InterPro"/>
</dbReference>
<dbReference type="GO" id="GO:0042626">
    <property type="term" value="F:ATPase-coupled transmembrane transporter activity"/>
    <property type="evidence" value="ECO:0000318"/>
    <property type="project" value="GO_Central"/>
</dbReference>
<dbReference type="Gene3D" id="3.40.50.300">
    <property type="entry name" value="P-loop containing nucleotide triphosphate hydrolases"/>
    <property type="match status" value="1"/>
</dbReference>
<dbReference type="InterPro" id="IPR003593">
    <property type="entry name" value="AAA+_ATPase"/>
</dbReference>
<dbReference type="InterPro" id="IPR003439">
    <property type="entry name" value="ABC_transporter-like_ATP-bd"/>
</dbReference>
<dbReference type="InterPro" id="IPR017871">
    <property type="entry name" value="ABC_transporter-like_CS"/>
</dbReference>
<dbReference type="InterPro" id="IPR050153">
    <property type="entry name" value="Metal_Ion_Import_ABC"/>
</dbReference>
<dbReference type="InterPro" id="IPR027417">
    <property type="entry name" value="P-loop_NTPase"/>
</dbReference>
<dbReference type="PANTHER" id="PTHR42734">
    <property type="entry name" value="METAL TRANSPORT SYSTEM ATP-BINDING PROTEIN TM_0124-RELATED"/>
    <property type="match status" value="1"/>
</dbReference>
<dbReference type="PANTHER" id="PTHR42734:SF17">
    <property type="entry name" value="METAL TRANSPORT SYSTEM ATP-BINDING PROTEIN TM_0124-RELATED"/>
    <property type="match status" value="1"/>
</dbReference>
<dbReference type="Pfam" id="PF00005">
    <property type="entry name" value="ABC_tran"/>
    <property type="match status" value="1"/>
</dbReference>
<dbReference type="SMART" id="SM00382">
    <property type="entry name" value="AAA"/>
    <property type="match status" value="1"/>
</dbReference>
<dbReference type="SUPFAM" id="SSF52540">
    <property type="entry name" value="P-loop containing nucleoside triphosphate hydrolases"/>
    <property type="match status" value="1"/>
</dbReference>
<dbReference type="PROSITE" id="PS00211">
    <property type="entry name" value="ABC_TRANSPORTER_1"/>
    <property type="match status" value="1"/>
</dbReference>
<dbReference type="PROSITE" id="PS50893">
    <property type="entry name" value="ABC_TRANSPORTER_2"/>
    <property type="match status" value="1"/>
</dbReference>
<accession>O84421</accession>
<sequence>MTKQMLLENVSFRYGKTGPLIVDHVSCEVYSGDFIGIIGPNGGGKTTLTQLMLGLLQPVCGSISTYSVQDHRPLSIGWVPQHFSYDAAFPITVKETVLSGRLATLPWYGRYTQEDHEAAEEALLTVDLIDYKDSCFSHLSGGQIQRVLLARALAARPEFLLLDEPTANIDPVNQQKILQILSALNKHCTILMITHDLHHTAGCFNRVFFMNKTLTTLADTTTISERFCCNTFGRCP</sequence>
<reference key="1">
    <citation type="journal article" date="1998" name="Science">
        <title>Genome sequence of an obligate intracellular pathogen of humans: Chlamydia trachomatis.</title>
        <authorList>
            <person name="Stephens R.S."/>
            <person name="Kalman S."/>
            <person name="Lammel C.J."/>
            <person name="Fan J."/>
            <person name="Marathe R."/>
            <person name="Aravind L."/>
            <person name="Mitchell W.P."/>
            <person name="Olinger L."/>
            <person name="Tatusov R.L."/>
            <person name="Zhao Q."/>
            <person name="Koonin E.V."/>
            <person name="Davis R.W."/>
        </authorList>
    </citation>
    <scope>NUCLEOTIDE SEQUENCE [LARGE SCALE GENOMIC DNA]</scope>
    <source>
        <strain>ATCC VR-885 / DSM 19411 / UW-3/Cx</strain>
    </source>
</reference>
<keyword id="KW-0067">ATP-binding</keyword>
<keyword id="KW-0997">Cell inner membrane</keyword>
<keyword id="KW-1003">Cell membrane</keyword>
<keyword id="KW-0472">Membrane</keyword>
<keyword id="KW-0547">Nucleotide-binding</keyword>
<keyword id="KW-1185">Reference proteome</keyword>
<keyword id="KW-0813">Transport</keyword>
<protein>
    <recommendedName>
        <fullName>Probable metal transport system ATP-binding protein CT_416</fullName>
    </recommendedName>
</protein>